<reference key="1">
    <citation type="submission" date="2007-11" db="EMBL/GenBank/DDBJ databases">
        <title>Complete sequence of chromosome of Shewanella baltica OS195.</title>
        <authorList>
            <consortium name="US DOE Joint Genome Institute"/>
            <person name="Copeland A."/>
            <person name="Lucas S."/>
            <person name="Lapidus A."/>
            <person name="Barry K."/>
            <person name="Glavina del Rio T."/>
            <person name="Dalin E."/>
            <person name="Tice H."/>
            <person name="Pitluck S."/>
            <person name="Chain P."/>
            <person name="Malfatti S."/>
            <person name="Shin M."/>
            <person name="Vergez L."/>
            <person name="Schmutz J."/>
            <person name="Larimer F."/>
            <person name="Land M."/>
            <person name="Hauser L."/>
            <person name="Kyrpides N."/>
            <person name="Kim E."/>
            <person name="Brettar I."/>
            <person name="Rodrigues J."/>
            <person name="Konstantinidis K."/>
            <person name="Klappenbach J."/>
            <person name="Hofle M."/>
            <person name="Tiedje J."/>
            <person name="Richardson P."/>
        </authorList>
    </citation>
    <scope>NUCLEOTIDE SEQUENCE [LARGE SCALE GENOMIC DNA]</scope>
    <source>
        <strain>OS195</strain>
    </source>
</reference>
<feature type="chain" id="PRO_1000074171" description="Phosphate acyltransferase">
    <location>
        <begin position="1"/>
        <end position="342"/>
    </location>
</feature>
<sequence>MTNLTLALDAMGGDHGPHVTVPAALRALQLHSFLKIILVGDKTEIDVYLRQAEANLLSRIEIIHTDEVVSMSDRPVHALRTRKNSSMRLAIELVRDDRAQACVSAGNTGALMAMAKVLLKTLPGVDRPALVSCLPAVTQKPVYLLDLGANISCDSETLFQFAVMGSVLCEAVDKKSRPKVALLNVGIEEIKGNDQVQQAAQLLQHTDQINYTGFIEGDEIYSGNVDVIVCDGFVGNITLKTSEGIAKLLVHQLKRGLTQGLFVRFLAKLIAPRIQAVLSQMNPDHYNGASLIGLRGIVVKSHGNADETAYLQAISLAVTEAQRRLPEMIKDRLESILLDINN</sequence>
<gene>
    <name evidence="1" type="primary">plsX</name>
    <name type="ordered locus">Sbal195_1756</name>
</gene>
<accession>A9KXI8</accession>
<comment type="function">
    <text evidence="1">Catalyzes the reversible formation of acyl-phosphate (acyl-PO(4)) from acyl-[acyl-carrier-protein] (acyl-ACP). This enzyme utilizes acyl-ACP as fatty acyl donor, but not acyl-CoA.</text>
</comment>
<comment type="catalytic activity">
    <reaction evidence="1">
        <text>a fatty acyl-[ACP] + phosphate = an acyl phosphate + holo-[ACP]</text>
        <dbReference type="Rhea" id="RHEA:42292"/>
        <dbReference type="Rhea" id="RHEA-COMP:9685"/>
        <dbReference type="Rhea" id="RHEA-COMP:14125"/>
        <dbReference type="ChEBI" id="CHEBI:43474"/>
        <dbReference type="ChEBI" id="CHEBI:59918"/>
        <dbReference type="ChEBI" id="CHEBI:64479"/>
        <dbReference type="ChEBI" id="CHEBI:138651"/>
        <dbReference type="EC" id="2.3.1.274"/>
    </reaction>
</comment>
<comment type="pathway">
    <text evidence="1">Lipid metabolism; phospholipid metabolism.</text>
</comment>
<comment type="subunit">
    <text evidence="1">Homodimer. Probably interacts with PlsY.</text>
</comment>
<comment type="subcellular location">
    <subcellularLocation>
        <location evidence="1">Cytoplasm</location>
    </subcellularLocation>
    <text evidence="1">Associated with the membrane possibly through PlsY.</text>
</comment>
<comment type="similarity">
    <text evidence="1">Belongs to the PlsX family.</text>
</comment>
<evidence type="ECO:0000255" key="1">
    <source>
        <dbReference type="HAMAP-Rule" id="MF_00019"/>
    </source>
</evidence>
<dbReference type="EC" id="2.3.1.274" evidence="1"/>
<dbReference type="EMBL" id="CP000891">
    <property type="protein sequence ID" value="ABX48927.1"/>
    <property type="molecule type" value="Genomic_DNA"/>
</dbReference>
<dbReference type="RefSeq" id="WP_006081227.1">
    <property type="nucleotide sequence ID" value="NC_009997.1"/>
</dbReference>
<dbReference type="SMR" id="A9KXI8"/>
<dbReference type="GeneID" id="11771973"/>
<dbReference type="KEGG" id="sbn:Sbal195_1756"/>
<dbReference type="HOGENOM" id="CLU_039379_1_0_6"/>
<dbReference type="UniPathway" id="UPA00085"/>
<dbReference type="Proteomes" id="UP000000770">
    <property type="component" value="Chromosome"/>
</dbReference>
<dbReference type="GO" id="GO:0005737">
    <property type="term" value="C:cytoplasm"/>
    <property type="evidence" value="ECO:0007669"/>
    <property type="project" value="UniProtKB-SubCell"/>
</dbReference>
<dbReference type="GO" id="GO:0043811">
    <property type="term" value="F:phosphate:acyl-[acyl carrier protein] acyltransferase activity"/>
    <property type="evidence" value="ECO:0007669"/>
    <property type="project" value="UniProtKB-UniRule"/>
</dbReference>
<dbReference type="GO" id="GO:0006633">
    <property type="term" value="P:fatty acid biosynthetic process"/>
    <property type="evidence" value="ECO:0007669"/>
    <property type="project" value="UniProtKB-UniRule"/>
</dbReference>
<dbReference type="GO" id="GO:0008654">
    <property type="term" value="P:phospholipid biosynthetic process"/>
    <property type="evidence" value="ECO:0007669"/>
    <property type="project" value="UniProtKB-KW"/>
</dbReference>
<dbReference type="Gene3D" id="3.40.718.10">
    <property type="entry name" value="Isopropylmalate Dehydrogenase"/>
    <property type="match status" value="1"/>
</dbReference>
<dbReference type="HAMAP" id="MF_00019">
    <property type="entry name" value="PlsX"/>
    <property type="match status" value="1"/>
</dbReference>
<dbReference type="InterPro" id="IPR003664">
    <property type="entry name" value="FA_synthesis"/>
</dbReference>
<dbReference type="InterPro" id="IPR012281">
    <property type="entry name" value="Phospholipid_synth_PlsX-like"/>
</dbReference>
<dbReference type="NCBIfam" id="TIGR00182">
    <property type="entry name" value="plsX"/>
    <property type="match status" value="1"/>
</dbReference>
<dbReference type="PANTHER" id="PTHR30100">
    <property type="entry name" value="FATTY ACID/PHOSPHOLIPID SYNTHESIS PROTEIN PLSX"/>
    <property type="match status" value="1"/>
</dbReference>
<dbReference type="PANTHER" id="PTHR30100:SF1">
    <property type="entry name" value="PHOSPHATE ACYLTRANSFERASE"/>
    <property type="match status" value="1"/>
</dbReference>
<dbReference type="Pfam" id="PF02504">
    <property type="entry name" value="FA_synthesis"/>
    <property type="match status" value="1"/>
</dbReference>
<dbReference type="PIRSF" id="PIRSF002465">
    <property type="entry name" value="Phsphlp_syn_PlsX"/>
    <property type="match status" value="1"/>
</dbReference>
<dbReference type="SUPFAM" id="SSF53659">
    <property type="entry name" value="Isocitrate/Isopropylmalate dehydrogenase-like"/>
    <property type="match status" value="1"/>
</dbReference>
<proteinExistence type="inferred from homology"/>
<keyword id="KW-0963">Cytoplasm</keyword>
<keyword id="KW-0444">Lipid biosynthesis</keyword>
<keyword id="KW-0443">Lipid metabolism</keyword>
<keyword id="KW-0594">Phospholipid biosynthesis</keyword>
<keyword id="KW-1208">Phospholipid metabolism</keyword>
<keyword id="KW-0808">Transferase</keyword>
<protein>
    <recommendedName>
        <fullName evidence="1">Phosphate acyltransferase</fullName>
        <ecNumber evidence="1">2.3.1.274</ecNumber>
    </recommendedName>
    <alternativeName>
        <fullName evidence="1">Acyl-ACP phosphotransacylase</fullName>
    </alternativeName>
    <alternativeName>
        <fullName evidence="1">Acyl-[acyl-carrier-protein]--phosphate acyltransferase</fullName>
    </alternativeName>
    <alternativeName>
        <fullName evidence="1">Phosphate-acyl-ACP acyltransferase</fullName>
    </alternativeName>
</protein>
<organism>
    <name type="scientific">Shewanella baltica (strain OS195)</name>
    <dbReference type="NCBI Taxonomy" id="399599"/>
    <lineage>
        <taxon>Bacteria</taxon>
        <taxon>Pseudomonadati</taxon>
        <taxon>Pseudomonadota</taxon>
        <taxon>Gammaproteobacteria</taxon>
        <taxon>Alteromonadales</taxon>
        <taxon>Shewanellaceae</taxon>
        <taxon>Shewanella</taxon>
    </lineage>
</organism>
<name>PLSX_SHEB9</name>